<reference key="1">
    <citation type="submission" date="2008-12" db="EMBL/GenBank/DDBJ databases">
        <title>Complete sequence of chromosome of Shewanella baltica OS223.</title>
        <authorList>
            <consortium name="US DOE Joint Genome Institute"/>
            <person name="Lucas S."/>
            <person name="Copeland A."/>
            <person name="Lapidus A."/>
            <person name="Glavina del Rio T."/>
            <person name="Dalin E."/>
            <person name="Tice H."/>
            <person name="Bruce D."/>
            <person name="Goodwin L."/>
            <person name="Pitluck S."/>
            <person name="Chertkov O."/>
            <person name="Meincke L."/>
            <person name="Brettin T."/>
            <person name="Detter J.C."/>
            <person name="Han C."/>
            <person name="Kuske C.R."/>
            <person name="Larimer F."/>
            <person name="Land M."/>
            <person name="Hauser L."/>
            <person name="Kyrpides N."/>
            <person name="Ovchinnikova G."/>
            <person name="Brettar I."/>
            <person name="Rodrigues J."/>
            <person name="Konstantinidis K."/>
            <person name="Tiedje J."/>
        </authorList>
    </citation>
    <scope>NUCLEOTIDE SEQUENCE [LARGE SCALE GENOMIC DNA]</scope>
    <source>
        <strain>OS223</strain>
    </source>
</reference>
<keyword id="KW-0489">Methyltransferase</keyword>
<keyword id="KW-0949">S-adenosyl-L-methionine</keyword>
<keyword id="KW-0808">Transferase</keyword>
<keyword id="KW-0831">Ubiquinone biosynthesis</keyword>
<organism>
    <name type="scientific">Shewanella baltica (strain OS223)</name>
    <dbReference type="NCBI Taxonomy" id="407976"/>
    <lineage>
        <taxon>Bacteria</taxon>
        <taxon>Pseudomonadati</taxon>
        <taxon>Pseudomonadota</taxon>
        <taxon>Gammaproteobacteria</taxon>
        <taxon>Alteromonadales</taxon>
        <taxon>Shewanellaceae</taxon>
        <taxon>Shewanella</taxon>
    </lineage>
</organism>
<comment type="function">
    <text evidence="1">O-methyltransferase that catalyzes the 2 O-methylation steps in the ubiquinone biosynthetic pathway.</text>
</comment>
<comment type="catalytic activity">
    <reaction evidence="1">
        <text>a 3-demethylubiquinol + S-adenosyl-L-methionine = a ubiquinol + S-adenosyl-L-homocysteine + H(+)</text>
        <dbReference type="Rhea" id="RHEA:44380"/>
        <dbReference type="Rhea" id="RHEA-COMP:9566"/>
        <dbReference type="Rhea" id="RHEA-COMP:10914"/>
        <dbReference type="ChEBI" id="CHEBI:15378"/>
        <dbReference type="ChEBI" id="CHEBI:17976"/>
        <dbReference type="ChEBI" id="CHEBI:57856"/>
        <dbReference type="ChEBI" id="CHEBI:59789"/>
        <dbReference type="ChEBI" id="CHEBI:84422"/>
        <dbReference type="EC" id="2.1.1.64"/>
    </reaction>
</comment>
<comment type="catalytic activity">
    <reaction evidence="1">
        <text>a 3-(all-trans-polyprenyl)benzene-1,2-diol + S-adenosyl-L-methionine = a 2-methoxy-6-(all-trans-polyprenyl)phenol + S-adenosyl-L-homocysteine + H(+)</text>
        <dbReference type="Rhea" id="RHEA:31411"/>
        <dbReference type="Rhea" id="RHEA-COMP:9550"/>
        <dbReference type="Rhea" id="RHEA-COMP:9551"/>
        <dbReference type="ChEBI" id="CHEBI:15378"/>
        <dbReference type="ChEBI" id="CHEBI:57856"/>
        <dbReference type="ChEBI" id="CHEBI:59789"/>
        <dbReference type="ChEBI" id="CHEBI:62729"/>
        <dbReference type="ChEBI" id="CHEBI:62731"/>
        <dbReference type="EC" id="2.1.1.222"/>
    </reaction>
</comment>
<comment type="pathway">
    <text evidence="1">Cofactor biosynthesis; ubiquinone biosynthesis.</text>
</comment>
<comment type="similarity">
    <text evidence="1">Belongs to the methyltransferase superfamily. UbiG/COQ3 family.</text>
</comment>
<sequence length="236" mass="26375">MHQNTNVDPQEIAKFERMAETWWDLNGEFKPLHLLNPLRLNYIDQTAGGIFGKKVLDVGCGGGILSESMARIGAEVDGLDMGDEPLEVARLHALETGVSINYVKNTAETHSQDHQAYYDVVTCMEMLEHVPDPQSVIKACCDMVKPGGFVFFSTINRNIKSYVHTILGAEYLLKMLPVGTHEHKKFIKPSELIELVDNTDLICTDALGISYNPLTGIFKYTPKVDVNYMIATRKVD</sequence>
<dbReference type="EC" id="2.1.1.222" evidence="1"/>
<dbReference type="EC" id="2.1.1.64" evidence="1"/>
<dbReference type="EMBL" id="CP001252">
    <property type="protein sequence ID" value="ACK46561.1"/>
    <property type="molecule type" value="Genomic_DNA"/>
</dbReference>
<dbReference type="RefSeq" id="WP_006086768.1">
    <property type="nucleotide sequence ID" value="NC_011663.1"/>
</dbReference>
<dbReference type="SMR" id="B8EA88"/>
<dbReference type="GeneID" id="11774793"/>
<dbReference type="KEGG" id="sbp:Sbal223_2057"/>
<dbReference type="HOGENOM" id="CLU_042432_5_0_6"/>
<dbReference type="UniPathway" id="UPA00232"/>
<dbReference type="Proteomes" id="UP000002507">
    <property type="component" value="Chromosome"/>
</dbReference>
<dbReference type="GO" id="GO:0102208">
    <property type="term" value="F:2-polyprenyl-6-hydroxyphenol methylase activity"/>
    <property type="evidence" value="ECO:0007669"/>
    <property type="project" value="UniProtKB-EC"/>
</dbReference>
<dbReference type="GO" id="GO:0061542">
    <property type="term" value="F:3-demethylubiquinol 3-O-methyltransferase activity"/>
    <property type="evidence" value="ECO:0007669"/>
    <property type="project" value="UniProtKB-UniRule"/>
</dbReference>
<dbReference type="GO" id="GO:0010420">
    <property type="term" value="F:polyprenyldihydroxybenzoate methyltransferase activity"/>
    <property type="evidence" value="ECO:0007669"/>
    <property type="project" value="InterPro"/>
</dbReference>
<dbReference type="GO" id="GO:0032259">
    <property type="term" value="P:methylation"/>
    <property type="evidence" value="ECO:0007669"/>
    <property type="project" value="UniProtKB-KW"/>
</dbReference>
<dbReference type="CDD" id="cd02440">
    <property type="entry name" value="AdoMet_MTases"/>
    <property type="match status" value="1"/>
</dbReference>
<dbReference type="FunFam" id="3.40.50.150:FF:000028">
    <property type="entry name" value="Ubiquinone biosynthesis O-methyltransferase"/>
    <property type="match status" value="1"/>
</dbReference>
<dbReference type="Gene3D" id="3.40.50.150">
    <property type="entry name" value="Vaccinia Virus protein VP39"/>
    <property type="match status" value="1"/>
</dbReference>
<dbReference type="HAMAP" id="MF_00472">
    <property type="entry name" value="UbiG"/>
    <property type="match status" value="1"/>
</dbReference>
<dbReference type="InterPro" id="IPR029063">
    <property type="entry name" value="SAM-dependent_MTases_sf"/>
</dbReference>
<dbReference type="InterPro" id="IPR010233">
    <property type="entry name" value="UbiG_MeTrfase"/>
</dbReference>
<dbReference type="NCBIfam" id="TIGR01983">
    <property type="entry name" value="UbiG"/>
    <property type="match status" value="1"/>
</dbReference>
<dbReference type="PANTHER" id="PTHR43464">
    <property type="entry name" value="METHYLTRANSFERASE"/>
    <property type="match status" value="1"/>
</dbReference>
<dbReference type="PANTHER" id="PTHR43464:SF19">
    <property type="entry name" value="UBIQUINONE BIOSYNTHESIS O-METHYLTRANSFERASE, MITOCHONDRIAL"/>
    <property type="match status" value="1"/>
</dbReference>
<dbReference type="Pfam" id="PF13489">
    <property type="entry name" value="Methyltransf_23"/>
    <property type="match status" value="1"/>
</dbReference>
<dbReference type="SUPFAM" id="SSF53335">
    <property type="entry name" value="S-adenosyl-L-methionine-dependent methyltransferases"/>
    <property type="match status" value="1"/>
</dbReference>
<name>UBIG_SHEB2</name>
<accession>B8EA88</accession>
<gene>
    <name evidence="1" type="primary">ubiG</name>
    <name type="ordered locus">Sbal223_2057</name>
</gene>
<feature type="chain" id="PRO_1000135512" description="Ubiquinone biosynthesis O-methyltransferase">
    <location>
        <begin position="1"/>
        <end position="236"/>
    </location>
</feature>
<feature type="binding site" evidence="1">
    <location>
        <position position="39"/>
    </location>
    <ligand>
        <name>S-adenosyl-L-methionine</name>
        <dbReference type="ChEBI" id="CHEBI:59789"/>
    </ligand>
</feature>
<feature type="binding site" evidence="1">
    <location>
        <position position="59"/>
    </location>
    <ligand>
        <name>S-adenosyl-L-methionine</name>
        <dbReference type="ChEBI" id="CHEBI:59789"/>
    </ligand>
</feature>
<feature type="binding site" evidence="1">
    <location>
        <position position="80"/>
    </location>
    <ligand>
        <name>S-adenosyl-L-methionine</name>
        <dbReference type="ChEBI" id="CHEBI:59789"/>
    </ligand>
</feature>
<feature type="binding site" evidence="1">
    <location>
        <position position="124"/>
    </location>
    <ligand>
        <name>S-adenosyl-L-methionine</name>
        <dbReference type="ChEBI" id="CHEBI:59789"/>
    </ligand>
</feature>
<proteinExistence type="inferred from homology"/>
<protein>
    <recommendedName>
        <fullName evidence="1">Ubiquinone biosynthesis O-methyltransferase</fullName>
    </recommendedName>
    <alternativeName>
        <fullName evidence="1">2-polyprenyl-6-hydroxyphenol methylase</fullName>
        <ecNumber evidence="1">2.1.1.222</ecNumber>
    </alternativeName>
    <alternativeName>
        <fullName evidence="1">3-demethylubiquinone 3-O-methyltransferase</fullName>
        <ecNumber evidence="1">2.1.1.64</ecNumber>
    </alternativeName>
</protein>
<evidence type="ECO:0000255" key="1">
    <source>
        <dbReference type="HAMAP-Rule" id="MF_00472"/>
    </source>
</evidence>